<comment type="function">
    <text evidence="1">Immediate-early transcription factor that controls the initiation of viral lytic gene expression and lytic reactivation from latency. Triggers lytic replication, and initiates a cellular senescence program in epithelial cells. Up-regulates human DCR3/TNFRSF6B by directly binding to its receptor. Globally induces a proteasome-dependent loss of SUMOylated proteins in the host cell and the loss of promeylocytic leukemia nuclear bodies. Improves the stability of the triplex capsid protein TRX1 by reducing the ubiquitination level of the latter. Mediates evasion of inflammasome activation and antiviral responses (T- and NK cell activation) during EBV early lytic infection.</text>
</comment>
<comment type="subunit">
    <text evidence="1">Interacts with human ATF7IP protein, leading to promote and regulate host genes in virus-infected cells. Interacts with RNA polymerase III complex; this interaction downregulates small RNA transcription and 5'-pppRNA production.</text>
</comment>
<comment type="subcellular location">
    <subcellularLocation>
        <location evidence="1">Host nucleus</location>
    </subcellularLocation>
    <subcellularLocation>
        <location evidence="1">Virion tegument</location>
    </subcellularLocation>
    <text evidence="1">Localizes to the host nucleus during the viral lytic induction.</text>
</comment>
<comment type="similarity">
    <text evidence="3">Belongs to the herpesviridae Rta family.</text>
</comment>
<organism>
    <name type="scientific">Epstein-Barr virus (strain GD1)</name>
    <name type="common">HHV-4</name>
    <name type="synonym">Human gammaherpesvirus 4</name>
    <dbReference type="NCBI Taxonomy" id="10376"/>
    <lineage>
        <taxon>Viruses</taxon>
        <taxon>Duplodnaviria</taxon>
        <taxon>Heunggongvirae</taxon>
        <taxon>Peploviricota</taxon>
        <taxon>Herviviricetes</taxon>
        <taxon>Herpesvirales</taxon>
        <taxon>Orthoherpesviridae</taxon>
        <taxon>Gammaherpesvirinae</taxon>
        <taxon>Lymphocryptovirus</taxon>
        <taxon>Lymphocryptovirus humangamma4</taxon>
    </lineage>
</organism>
<gene>
    <name type="ORF">BRLF1</name>
</gene>
<reference key="1">
    <citation type="journal article" date="2005" name="J. Virol.">
        <title>Genomic sequence analysis of Epstein-Barr virus strain GD1 from a nasopharyngeal carcinoma patient.</title>
        <authorList>
            <person name="Zeng M.-S."/>
            <person name="Li D.-J."/>
            <person name="Liu Q.-L."/>
            <person name="Song L.-B."/>
            <person name="Li M.-Z."/>
            <person name="Zhang R.-H."/>
            <person name="Yu X.-J."/>
            <person name="Wang H.-M."/>
            <person name="Ernberg I."/>
            <person name="Zeng Y.-X."/>
        </authorList>
    </citation>
    <scope>NUCLEOTIDE SEQUENCE [LARGE SCALE GENOMIC DNA]</scope>
</reference>
<feature type="chain" id="PRO_0000408272" description="Replication and transcription activator">
    <location>
        <begin position="1"/>
        <end position="605"/>
    </location>
</feature>
<feature type="region of interest" description="Disordered" evidence="2">
    <location>
        <begin position="307"/>
        <end position="381"/>
    </location>
</feature>
<feature type="region of interest" description="Disordered" evidence="2">
    <location>
        <begin position="447"/>
        <end position="501"/>
    </location>
</feature>
<feature type="compositionally biased region" description="Low complexity" evidence="2">
    <location>
        <begin position="321"/>
        <end position="338"/>
    </location>
</feature>
<feature type="compositionally biased region" description="Basic and acidic residues" evidence="2">
    <location>
        <begin position="341"/>
        <end position="353"/>
    </location>
</feature>
<feature type="compositionally biased region" description="Basic residues" evidence="2">
    <location>
        <begin position="355"/>
        <end position="364"/>
    </location>
</feature>
<organismHost>
    <name type="scientific">Homo sapiens</name>
    <name type="common">Human</name>
    <dbReference type="NCBI Taxonomy" id="9606"/>
</organismHost>
<proteinExistence type="evidence at protein level"/>
<protein>
    <recommendedName>
        <fullName>Replication and transcription activator</fullName>
        <shortName>Rta</shortName>
    </recommendedName>
    <alternativeName>
        <fullName>Immediate-early protein Rta</fullName>
    </alternativeName>
    <alternativeName>
        <fullName>Protein R</fullName>
    </alternativeName>
</protein>
<name>BRLF1_EBVG</name>
<sequence length="605" mass="66680">MRPKKDGLEDFLRLTPEIKKQLGSLVSDYCNVLNKEFTAGSVEITLRSYKICKAFINEAKAHGREWGGLMATLNICNFWAILRNNRVRRRAENAGNDACSIACPIVMRYVLDHLIVVTDRFFIQAPSNRVMIPATIGTAMYKLLKHSRVRAYTYSKVLGVDRAAIMASGKQVVEHLNRMEKEGLLSSKFKAFCKWVFTYPVLEEMFQTMVSSKTGHLTDDVKDVRALIKTLPRASYSSHAGQRSYVSGVLPACLLSTKSKAVETPILVSGADRMDEELMGNDGGASHTEARYSESGQFHAFTDELESLPSPTMPLKPGAQSADCGDSSSSSSDSGNSDTEQSEREEARAEAPRLRAPKSRRTSRPNRGQTPCPSNAEEPEQPWIAAVHQESDERPIFPHPSKPTFLPPVKRKKGLRDSREGMFLPKPEAGSAISDVFEGREVCQPKRIRPFHPPGSPWANRPLPASLAPTPTGPVHEPVGSLTPAPVPKPLDPAPAVTPEASHLLEDPDEETSQAVKALREMADTVIPQKEEAAICGQMDLNHPPPRGHLDELTTTLESMTEDLNLDSPLTPELNEILDTFLNDECLLHAMHISTGLSIFDTSLF</sequence>
<keyword id="KW-0002">3D-structure</keyword>
<keyword id="KW-0010">Activator</keyword>
<keyword id="KW-0238">DNA-binding</keyword>
<keyword id="KW-0244">Early protein</keyword>
<keyword id="KW-1048">Host nucleus</keyword>
<keyword id="KW-0945">Host-virus interaction</keyword>
<keyword id="KW-0804">Transcription</keyword>
<keyword id="KW-0805">Transcription regulation</keyword>
<keyword id="KW-1251">Viral latency</keyword>
<keyword id="KW-1272">Viral reactivation from latency</keyword>
<keyword id="KW-0946">Virion</keyword>
<keyword id="KW-0920">Virion tegument</keyword>
<dbReference type="EMBL" id="AY961628">
    <property type="protein sequence ID" value="AAY41122.1"/>
    <property type="molecule type" value="Genomic_DNA"/>
</dbReference>
<dbReference type="PDB" id="6NCA">
    <property type="method" value="X-ray"/>
    <property type="resolution" value="3.30 A"/>
    <property type="chains" value="1/2/3/4/5/6/7/8/U/V/W/X/Y/Z/u/v/w/x/y/z=109-117"/>
</dbReference>
<dbReference type="PDBsum" id="6NCA"/>
<dbReference type="SMR" id="Q3KSS7"/>
<dbReference type="IntAct" id="Q3KSS7">
    <property type="interactions" value="5"/>
</dbReference>
<dbReference type="MINT" id="Q3KSS7"/>
<dbReference type="Proteomes" id="UP000007641">
    <property type="component" value="Genome"/>
</dbReference>
<dbReference type="GO" id="GO:0042025">
    <property type="term" value="C:host cell nucleus"/>
    <property type="evidence" value="ECO:0007669"/>
    <property type="project" value="UniProtKB-SubCell"/>
</dbReference>
<dbReference type="GO" id="GO:0019033">
    <property type="term" value="C:viral tegument"/>
    <property type="evidence" value="ECO:0007669"/>
    <property type="project" value="UniProtKB-SubCell"/>
</dbReference>
<dbReference type="GO" id="GO:0003677">
    <property type="term" value="F:DNA binding"/>
    <property type="evidence" value="ECO:0007669"/>
    <property type="project" value="UniProtKB-KW"/>
</dbReference>
<dbReference type="GO" id="GO:0006355">
    <property type="term" value="P:regulation of DNA-templated transcription"/>
    <property type="evidence" value="ECO:0007669"/>
    <property type="project" value="InterPro"/>
</dbReference>
<dbReference type="GO" id="GO:0019046">
    <property type="term" value="P:release from viral latency"/>
    <property type="evidence" value="ECO:0007669"/>
    <property type="project" value="UniProtKB-KW"/>
</dbReference>
<dbReference type="InterPro" id="IPR004998">
    <property type="entry name" value="Herpes_TAF50"/>
</dbReference>
<dbReference type="Pfam" id="PF03326">
    <property type="entry name" value="Herpes_TAF50"/>
    <property type="match status" value="1"/>
</dbReference>
<accession>Q3KSS7</accession>
<evidence type="ECO:0000250" key="1">
    <source>
        <dbReference type="UniProtKB" id="P03209"/>
    </source>
</evidence>
<evidence type="ECO:0000256" key="2">
    <source>
        <dbReference type="SAM" id="MobiDB-lite"/>
    </source>
</evidence>
<evidence type="ECO:0000305" key="3"/>